<protein>
    <recommendedName>
        <fullName evidence="1">Malate dehydrogenase</fullName>
        <ecNumber evidence="1">1.1.1.37</ecNumber>
    </recommendedName>
</protein>
<accession>Q92IA0</accession>
<feature type="chain" id="PRO_0000113467" description="Malate dehydrogenase">
    <location>
        <begin position="1"/>
        <end position="314"/>
    </location>
</feature>
<feature type="active site" description="Proton acceptor" evidence="1">
    <location>
        <position position="177"/>
    </location>
</feature>
<feature type="binding site" evidence="1">
    <location>
        <begin position="11"/>
        <end position="16"/>
    </location>
    <ligand>
        <name>NAD(+)</name>
        <dbReference type="ChEBI" id="CHEBI:57540"/>
    </ligand>
</feature>
<feature type="binding site" evidence="1">
    <location>
        <position position="35"/>
    </location>
    <ligand>
        <name>NAD(+)</name>
        <dbReference type="ChEBI" id="CHEBI:57540"/>
    </ligand>
</feature>
<feature type="binding site" evidence="1">
    <location>
        <position position="84"/>
    </location>
    <ligand>
        <name>substrate</name>
    </ligand>
</feature>
<feature type="binding site" evidence="1">
    <location>
        <position position="90"/>
    </location>
    <ligand>
        <name>substrate</name>
    </ligand>
</feature>
<feature type="binding site" evidence="1">
    <location>
        <position position="97"/>
    </location>
    <ligand>
        <name>NAD(+)</name>
        <dbReference type="ChEBI" id="CHEBI:57540"/>
    </ligand>
</feature>
<feature type="binding site" evidence="1">
    <location>
        <begin position="120"/>
        <end position="122"/>
    </location>
    <ligand>
        <name>NAD(+)</name>
        <dbReference type="ChEBI" id="CHEBI:57540"/>
    </ligand>
</feature>
<feature type="binding site" evidence="1">
    <location>
        <position position="122"/>
    </location>
    <ligand>
        <name>substrate</name>
    </ligand>
</feature>
<feature type="binding site" evidence="1">
    <location>
        <position position="153"/>
    </location>
    <ligand>
        <name>substrate</name>
    </ligand>
</feature>
<comment type="function">
    <text evidence="1">Catalyzes the reversible oxidation of malate to oxaloacetate.</text>
</comment>
<comment type="catalytic activity">
    <reaction evidence="1">
        <text>(S)-malate + NAD(+) = oxaloacetate + NADH + H(+)</text>
        <dbReference type="Rhea" id="RHEA:21432"/>
        <dbReference type="ChEBI" id="CHEBI:15378"/>
        <dbReference type="ChEBI" id="CHEBI:15589"/>
        <dbReference type="ChEBI" id="CHEBI:16452"/>
        <dbReference type="ChEBI" id="CHEBI:57540"/>
        <dbReference type="ChEBI" id="CHEBI:57945"/>
        <dbReference type="EC" id="1.1.1.37"/>
    </reaction>
</comment>
<comment type="similarity">
    <text evidence="1">Belongs to the LDH/MDH superfamily. MDH type 3 family.</text>
</comment>
<sequence length="314" mass="33638">MKQNAKISLIGSGNIGGTLAHLISLRELGDIVLFDVTEGVPQGKALDLMQAGTIAGSDIKIKGTNDYKDIEGSDAIIITAGLPRKPGMSREDLISINTGIMKTVAANVKKYAPDAFVIVITNPLDVMVYVMLKESGLPHNKVIGMAGVLDSSRFNLFLAEEFKVSVNNVNSMVLGGHGDAMVPLARYSTISGVPIPDLIKMGLSSNENIEKIIDRTRNGGGEIVALLKTGSAYYAPAASAIEMLESYLKDKRQILTCAAHLQGEYGVHDLYVGVPIMIGKEGVLRVIELQLTAEEKALFDKSVEGVKKLIETIK</sequence>
<organism>
    <name type="scientific">Rickettsia conorii (strain ATCC VR-613 / Malish 7)</name>
    <dbReference type="NCBI Taxonomy" id="272944"/>
    <lineage>
        <taxon>Bacteria</taxon>
        <taxon>Pseudomonadati</taxon>
        <taxon>Pseudomonadota</taxon>
        <taxon>Alphaproteobacteria</taxon>
        <taxon>Rickettsiales</taxon>
        <taxon>Rickettsiaceae</taxon>
        <taxon>Rickettsieae</taxon>
        <taxon>Rickettsia</taxon>
        <taxon>spotted fever group</taxon>
    </lineage>
</organism>
<keyword id="KW-0520">NAD</keyword>
<keyword id="KW-0560">Oxidoreductase</keyword>
<keyword id="KW-0816">Tricarboxylic acid cycle</keyword>
<reference key="1">
    <citation type="journal article" date="2001" name="Science">
        <title>Mechanisms of evolution in Rickettsia conorii and R. prowazekii.</title>
        <authorList>
            <person name="Ogata H."/>
            <person name="Audic S."/>
            <person name="Renesto-Audiffren P."/>
            <person name="Fournier P.-E."/>
            <person name="Barbe V."/>
            <person name="Samson D."/>
            <person name="Roux V."/>
            <person name="Cossart P."/>
            <person name="Weissenbach J."/>
            <person name="Claverie J.-M."/>
            <person name="Raoult D."/>
        </authorList>
    </citation>
    <scope>NUCLEOTIDE SEQUENCE [LARGE SCALE GENOMIC DNA]</scope>
    <source>
        <strain>ATCC VR-613 / Malish 7</strain>
    </source>
</reference>
<gene>
    <name evidence="1" type="primary">mdh</name>
    <name type="ordered locus">RC0520</name>
</gene>
<proteinExistence type="inferred from homology"/>
<name>MDH_RICCN</name>
<dbReference type="EC" id="1.1.1.37" evidence="1"/>
<dbReference type="EMBL" id="AE006914">
    <property type="protein sequence ID" value="AAL03058.1"/>
    <property type="molecule type" value="Genomic_DNA"/>
</dbReference>
<dbReference type="PIR" id="H97764">
    <property type="entry name" value="H97764"/>
</dbReference>
<dbReference type="RefSeq" id="WP_010977159.1">
    <property type="nucleotide sequence ID" value="NC_003103.1"/>
</dbReference>
<dbReference type="SMR" id="Q92IA0"/>
<dbReference type="GeneID" id="927642"/>
<dbReference type="KEGG" id="rco:RC0520"/>
<dbReference type="PATRIC" id="fig|272944.4.peg.594"/>
<dbReference type="HOGENOM" id="CLU_045401_2_1_5"/>
<dbReference type="Proteomes" id="UP000000816">
    <property type="component" value="Chromosome"/>
</dbReference>
<dbReference type="GO" id="GO:0004459">
    <property type="term" value="F:L-lactate dehydrogenase activity"/>
    <property type="evidence" value="ECO:0007669"/>
    <property type="project" value="TreeGrafter"/>
</dbReference>
<dbReference type="GO" id="GO:0030060">
    <property type="term" value="F:L-malate dehydrogenase (NAD+) activity"/>
    <property type="evidence" value="ECO:0007669"/>
    <property type="project" value="UniProtKB-UniRule"/>
</dbReference>
<dbReference type="GO" id="GO:0006089">
    <property type="term" value="P:lactate metabolic process"/>
    <property type="evidence" value="ECO:0007669"/>
    <property type="project" value="TreeGrafter"/>
</dbReference>
<dbReference type="GO" id="GO:0006099">
    <property type="term" value="P:tricarboxylic acid cycle"/>
    <property type="evidence" value="ECO:0007669"/>
    <property type="project" value="UniProtKB-UniRule"/>
</dbReference>
<dbReference type="CDD" id="cd01339">
    <property type="entry name" value="LDH-like_MDH"/>
    <property type="match status" value="1"/>
</dbReference>
<dbReference type="FunFam" id="3.40.50.720:FF:000018">
    <property type="entry name" value="Malate dehydrogenase"/>
    <property type="match status" value="1"/>
</dbReference>
<dbReference type="FunFam" id="3.90.110.10:FF:000004">
    <property type="entry name" value="Malate dehydrogenase"/>
    <property type="match status" value="1"/>
</dbReference>
<dbReference type="Gene3D" id="3.90.110.10">
    <property type="entry name" value="Lactate dehydrogenase/glycoside hydrolase, family 4, C-terminal"/>
    <property type="match status" value="1"/>
</dbReference>
<dbReference type="Gene3D" id="3.40.50.720">
    <property type="entry name" value="NAD(P)-binding Rossmann-like Domain"/>
    <property type="match status" value="1"/>
</dbReference>
<dbReference type="HAMAP" id="MF_00487">
    <property type="entry name" value="Malate_dehydrog_3"/>
    <property type="match status" value="1"/>
</dbReference>
<dbReference type="InterPro" id="IPR001557">
    <property type="entry name" value="L-lactate/malate_DH"/>
</dbReference>
<dbReference type="InterPro" id="IPR022383">
    <property type="entry name" value="Lactate/malate_DH_C"/>
</dbReference>
<dbReference type="InterPro" id="IPR001236">
    <property type="entry name" value="Lactate/malate_DH_N"/>
</dbReference>
<dbReference type="InterPro" id="IPR015955">
    <property type="entry name" value="Lactate_DH/Glyco_Ohase_4_C"/>
</dbReference>
<dbReference type="InterPro" id="IPR011275">
    <property type="entry name" value="Malate_DH_type3"/>
</dbReference>
<dbReference type="InterPro" id="IPR036291">
    <property type="entry name" value="NAD(P)-bd_dom_sf"/>
</dbReference>
<dbReference type="NCBIfam" id="TIGR01763">
    <property type="entry name" value="MalateDH_bact"/>
    <property type="match status" value="1"/>
</dbReference>
<dbReference type="NCBIfam" id="NF004863">
    <property type="entry name" value="PRK06223.1"/>
    <property type="match status" value="1"/>
</dbReference>
<dbReference type="PANTHER" id="PTHR43128">
    <property type="entry name" value="L-2-HYDROXYCARBOXYLATE DEHYDROGENASE (NAD(P)(+))"/>
    <property type="match status" value="1"/>
</dbReference>
<dbReference type="PANTHER" id="PTHR43128:SF16">
    <property type="entry name" value="L-LACTATE DEHYDROGENASE"/>
    <property type="match status" value="1"/>
</dbReference>
<dbReference type="Pfam" id="PF02866">
    <property type="entry name" value="Ldh_1_C"/>
    <property type="match status" value="1"/>
</dbReference>
<dbReference type="Pfam" id="PF00056">
    <property type="entry name" value="Ldh_1_N"/>
    <property type="match status" value="1"/>
</dbReference>
<dbReference type="PIRSF" id="PIRSF000102">
    <property type="entry name" value="Lac_mal_DH"/>
    <property type="match status" value="1"/>
</dbReference>
<dbReference type="PRINTS" id="PR00086">
    <property type="entry name" value="LLDHDRGNASE"/>
</dbReference>
<dbReference type="SUPFAM" id="SSF56327">
    <property type="entry name" value="LDH C-terminal domain-like"/>
    <property type="match status" value="1"/>
</dbReference>
<dbReference type="SUPFAM" id="SSF51735">
    <property type="entry name" value="NAD(P)-binding Rossmann-fold domains"/>
    <property type="match status" value="1"/>
</dbReference>
<evidence type="ECO:0000255" key="1">
    <source>
        <dbReference type="HAMAP-Rule" id="MF_00487"/>
    </source>
</evidence>